<protein>
    <recommendedName>
        <fullName>DNA endonuclease RBBP8</fullName>
        <ecNumber evidence="2">3.1.-.-</ecNumber>
    </recommendedName>
    <alternativeName>
        <fullName>CtBP-interacting protein</fullName>
        <shortName>CtIP</shortName>
    </alternativeName>
</protein>
<organism>
    <name type="scientific">Xenopus laevis</name>
    <name type="common">African clawed frog</name>
    <dbReference type="NCBI Taxonomy" id="8355"/>
    <lineage>
        <taxon>Eukaryota</taxon>
        <taxon>Metazoa</taxon>
        <taxon>Chordata</taxon>
        <taxon>Craniata</taxon>
        <taxon>Vertebrata</taxon>
        <taxon>Euteleostomi</taxon>
        <taxon>Amphibia</taxon>
        <taxon>Batrachia</taxon>
        <taxon>Anura</taxon>
        <taxon>Pipoidea</taxon>
        <taxon>Pipidae</taxon>
        <taxon>Xenopodinae</taxon>
        <taxon>Xenopus</taxon>
        <taxon>Xenopus</taxon>
    </lineage>
</organism>
<comment type="function">
    <text evidence="2 4 5 6">Endonuclease that cooperates with the MRE11-RAD50-NBN (MRN) complex in DNA-end resection, the first step of double-strand break (DSB) repair through the homologous recombination (HR) pathway (PubMed:20064462, PubMed:23273981). Functions downstream of the MRN complex and ATM, promotes ATR activation and its recruitment to DSBs in the S/G2 phase facilitating the generation of ssDNA (By similarity). Specifically promotes the endonuclease activity of the MRN complex to clear DNA ends containing protein adducts: recruited to DSBs by nbn following phosphorylation, and promotes the endonuclease of mre11 to clear protein-DNA adducts and generate clean double-strand break ends (By similarity). The MRN complex and rbbp8/CtIP are also required for chromosome alignment during metaphase (PubMed:23434370).</text>
</comment>
<comment type="subunit">
    <text evidence="2 7">Homotetramer; formed by antiparallel association of helical extensions protruding from the N-termini of two parallel coiled-coil dimers (By similarity). Interacts with the MRN complex; the interaction links DNA sensing to resection (By similarity). Interacts with samhd1 (PubMed:29670289).</text>
</comment>
<comment type="subcellular location">
    <subcellularLocation>
        <location evidence="4">Nucleus</location>
    </subcellularLocation>
    <subcellularLocation>
        <location evidence="2">Chromosome</location>
    </subcellularLocation>
    <text evidence="2">Associates with sites of DNA damage in S/G2 phase. Recruited to DSBs by the MRE11-RAD50-NBN (MRN) complex following phosphorylation.</text>
</comment>
<comment type="domain">
    <text evidence="4">The damage-recruitment motif is required for DNA binding and translocation to sites of DNA damage.</text>
</comment>
<comment type="PTM">
    <text evidence="5">Phosphorylation at Thr-818 by atr promotes recruitment to double-strand breaks (DSBs).</text>
</comment>
<comment type="miscellaneous">
    <text evidence="2">Binds one Zn(2+) atom per dimer. Zn(2+)-binding is not required for homotetramerization.</text>
</comment>
<comment type="similarity">
    <text evidence="8">Belongs to the COM1/SAE2/CtIP family.</text>
</comment>
<accession>Q6GNV6</accession>
<evidence type="ECO:0000250" key="1"/>
<evidence type="ECO:0000250" key="2">
    <source>
        <dbReference type="UniProtKB" id="Q99708"/>
    </source>
</evidence>
<evidence type="ECO:0000256" key="3">
    <source>
        <dbReference type="SAM" id="MobiDB-lite"/>
    </source>
</evidence>
<evidence type="ECO:0000269" key="4">
    <source>
    </source>
</evidence>
<evidence type="ECO:0000269" key="5">
    <source>
    </source>
</evidence>
<evidence type="ECO:0000269" key="6">
    <source>
    </source>
</evidence>
<evidence type="ECO:0000269" key="7">
    <source>
    </source>
</evidence>
<evidence type="ECO:0000305" key="8"/>
<gene>
    <name type="primary">rbbp8</name>
    <name type="synonym">ctip</name>
</gene>
<keyword id="KW-0131">Cell cycle</keyword>
<keyword id="KW-0132">Cell division</keyword>
<keyword id="KW-0158">Chromosome</keyword>
<keyword id="KW-0175">Coiled coil</keyword>
<keyword id="KW-0227">DNA damage</keyword>
<keyword id="KW-0234">DNA repair</keyword>
<keyword id="KW-0238">DNA-binding</keyword>
<keyword id="KW-0255">Endonuclease</keyword>
<keyword id="KW-0378">Hydrolase</keyword>
<keyword id="KW-0469">Meiosis</keyword>
<keyword id="KW-0498">Mitosis</keyword>
<keyword id="KW-0540">Nuclease</keyword>
<keyword id="KW-0539">Nucleus</keyword>
<keyword id="KW-0597">Phosphoprotein</keyword>
<keyword id="KW-1185">Reference proteome</keyword>
<keyword id="KW-0862">Zinc</keyword>
<sequence length="856" mass="98292">MSITASTCGSPSSSESLPNGDLFKELWSKLKECHDKDLQELLMKIGKLKKERCLDAQRLEEFYTKNQHLREQQKTLHDTIKVLEDRLRAGLCDRCTVTEEHMRKKQQEFENIRQQNLKLITELMNDKNALQDENKRLSEQLHDMQKNRHRRKSDEENPADTGDGEDGVIPDSPLSTFSLSMVSRMRRKKENKHVRYTEQTQEDALTFDRKISSGTRPQISTQVNMRKGEDVLVAETLELAPLPNKYEVCTEKPVFNLATVVAETLGLDAMEESQSQSVFNQPGITCAPLFHKSEDSSPRQVKVEFTEGSMEGFQTNDDDTEWNRREASPVFGEPVRNIRRGTDMDCSSPPLPVGLSSKLKSHCSRNAPDFSVHAKAEDGALLTRLSHCIETDSVISQCSSNRQDVLRPSPNKSDAQMGKYIFDSEQHKQTGNRYGKRKNAEAEQEESCESSFDKENNIPLKDISGARHSMLDKPLDLSDRFSVLRPQDRSHESSSRTKLTISLVPEKPDTKTILHIDLKENLHQQTRQKKVFVSGLVEHSAFNLHEDNEVTEEDNKPFHDSETEIMCHVPKRKPRAVHRGVQPTSVLQPNLHMVHACLESQGRPPIDNMQWSIDPGADLSQYEMDMTMEDSKSGSPAKPELEDMDYTYVNESCLLKLKMGDPDDSEAESKDQDSFGEMFDKTEYGEYASYIKDKSPSQSISCKERSDIPSIENKKITSEKEHESKGEPYQKQKAFVEPYFQRPERKKPAIDFPHIEVVRNKEERRKMLGHTCKECELYYADLPEEERAKKLASCSRHRFRYIPPSTPENFWEVGFPSTQTCKDRGYIKEELSPCQRPRRRQPYNAIFTSKIKEQKT</sequence>
<name>CTIP_XENLA</name>
<proteinExistence type="evidence at protein level"/>
<reference key="1">
    <citation type="journal article" date="2009" name="Mol. Cell">
        <title>CtIP links DNA double-strand break sensing to resection.</title>
        <authorList>
            <person name="You Z."/>
            <person name="Shi L.Z."/>
            <person name="Zhu Q."/>
            <person name="Wu P."/>
            <person name="Zhang Y.W."/>
            <person name="Basilio A."/>
            <person name="Tonnu N."/>
            <person name="Verma I.M."/>
            <person name="Berns M.W."/>
            <person name="Hunter T."/>
        </authorList>
    </citation>
    <scope>NUCLEOTIDE SEQUENCE [MRNA]</scope>
    <scope>FUNCTION</scope>
    <scope>DNA-BINDING</scope>
    <scope>SUBCELLULAR LOCATION</scope>
    <scope>MUTAGENESIS OF ARG-496 AND LYS-498</scope>
</reference>
<reference key="2">
    <citation type="submission" date="2004-06" db="EMBL/GenBank/DDBJ databases">
        <authorList>
            <consortium name="NIH - Xenopus Gene Collection (XGC) project"/>
        </authorList>
    </citation>
    <scope>NUCLEOTIDE SEQUENCE [LARGE SCALE MRNA]</scope>
    <source>
        <tissue>Embryo</tissue>
    </source>
</reference>
<reference key="3">
    <citation type="journal article" date="2018" name="Nature">
        <title>SAMHD1 acts at stalled replication forks to prevent interferon induction.</title>
        <authorList>
            <person name="Coquel F."/>
            <person name="Silva M.J."/>
            <person name="Techer H."/>
            <person name="Zadorozhny K."/>
            <person name="Sharma S."/>
            <person name="Nieminuszczy J."/>
            <person name="Mettling C."/>
            <person name="Dardillac E."/>
            <person name="Barthe A."/>
            <person name="Schmitz A.L."/>
            <person name="Promonet A."/>
            <person name="Cribier A."/>
            <person name="Sarrazin A."/>
            <person name="Niedzwiedz W."/>
            <person name="Lopez B."/>
            <person name="Costanzo V."/>
            <person name="Krejci L."/>
            <person name="Chabes A."/>
            <person name="Benkirane M."/>
            <person name="Lin Y.L."/>
            <person name="Pasero P."/>
        </authorList>
    </citation>
    <scope>INTERACTION WITH SAMHD1</scope>
</reference>
<reference key="4">
    <citation type="journal article" date="2013" name="Mol. Cell">
        <title>Activation of DSB processing requires phosphorylation of CtIP by ATR.</title>
        <authorList>
            <person name="Peterson S.E."/>
            <person name="Li Y."/>
            <person name="Wu-Baer F."/>
            <person name="Chait B.T."/>
            <person name="Baer R."/>
            <person name="Yan H."/>
            <person name="Gottesman M.E."/>
            <person name="Gautier J."/>
        </authorList>
    </citation>
    <scope>FUNCTION</scope>
    <scope>PHOSPHORYLATION AT THR-818</scope>
</reference>
<reference key="5">
    <citation type="journal article" date="2013" name="Mol. Cell">
        <title>The MRN-CtIP pathway is required for metaphase chromosome alignment.</title>
        <authorList>
            <person name="Rozier L."/>
            <person name="Guo Y."/>
            <person name="Peterson S."/>
            <person name="Sato M."/>
            <person name="Baer R."/>
            <person name="Gautier J."/>
            <person name="Mao Y."/>
        </authorList>
    </citation>
    <scope>FUNCTION</scope>
</reference>
<dbReference type="EC" id="3.1.-.-" evidence="2"/>
<dbReference type="EMBL" id="BC073395">
    <property type="protein sequence ID" value="AAH73395.1"/>
    <property type="molecule type" value="mRNA"/>
</dbReference>
<dbReference type="EMBL" id="GU207840">
    <property type="protein sequence ID" value="ACZ97554.1"/>
    <property type="molecule type" value="mRNA"/>
</dbReference>
<dbReference type="RefSeq" id="NP_001085825.1">
    <property type="nucleotide sequence ID" value="NM_001092356.1"/>
</dbReference>
<dbReference type="SMR" id="Q6GNV6"/>
<dbReference type="DNASU" id="444252"/>
<dbReference type="GeneID" id="444252"/>
<dbReference type="KEGG" id="xla:444252"/>
<dbReference type="AGR" id="Xenbase:XB-GENE-5953161"/>
<dbReference type="CTD" id="444252"/>
<dbReference type="Xenbase" id="XB-GENE-5953161">
    <property type="gene designation" value="rbbp8.L"/>
</dbReference>
<dbReference type="OrthoDB" id="5801062at2759"/>
<dbReference type="Proteomes" id="UP000186698">
    <property type="component" value="Chromosome 6L"/>
</dbReference>
<dbReference type="Bgee" id="444252">
    <property type="expression patterns" value="Expressed in egg cell and 18 other cell types or tissues"/>
</dbReference>
<dbReference type="GO" id="GO:0005694">
    <property type="term" value="C:chromosome"/>
    <property type="evidence" value="ECO:0007669"/>
    <property type="project" value="UniProtKB-SubCell"/>
</dbReference>
<dbReference type="GO" id="GO:0005634">
    <property type="term" value="C:nucleus"/>
    <property type="evidence" value="ECO:0007669"/>
    <property type="project" value="UniProtKB-SubCell"/>
</dbReference>
<dbReference type="GO" id="GO:0003684">
    <property type="term" value="F:damaged DNA binding"/>
    <property type="evidence" value="ECO:0000318"/>
    <property type="project" value="GO_Central"/>
</dbReference>
<dbReference type="GO" id="GO:0004519">
    <property type="term" value="F:endonuclease activity"/>
    <property type="evidence" value="ECO:0007669"/>
    <property type="project" value="UniProtKB-KW"/>
</dbReference>
<dbReference type="GO" id="GO:0051301">
    <property type="term" value="P:cell division"/>
    <property type="evidence" value="ECO:0007669"/>
    <property type="project" value="UniProtKB-KW"/>
</dbReference>
<dbReference type="GO" id="GO:0010792">
    <property type="term" value="P:DNA double-strand break processing involved in repair via single-strand annealing"/>
    <property type="evidence" value="ECO:0000318"/>
    <property type="project" value="GO_Central"/>
</dbReference>
<dbReference type="GO" id="GO:0051321">
    <property type="term" value="P:meiotic cell cycle"/>
    <property type="evidence" value="ECO:0007669"/>
    <property type="project" value="UniProtKB-KW"/>
</dbReference>
<dbReference type="GO" id="GO:0051310">
    <property type="term" value="P:metaphase chromosome alignment"/>
    <property type="evidence" value="ECO:0000314"/>
    <property type="project" value="UniProtKB"/>
</dbReference>
<dbReference type="InterPro" id="IPR019518">
    <property type="entry name" value="CtIP_N"/>
</dbReference>
<dbReference type="InterPro" id="IPR013882">
    <property type="entry name" value="Ctp1_C"/>
</dbReference>
<dbReference type="InterPro" id="IPR033316">
    <property type="entry name" value="RBBP8-like"/>
</dbReference>
<dbReference type="PANTHER" id="PTHR15107:SF4">
    <property type="entry name" value="DNA ENDONUCLEASE RBBP8"/>
    <property type="match status" value="1"/>
</dbReference>
<dbReference type="PANTHER" id="PTHR15107">
    <property type="entry name" value="RETINOBLASTOMA BINDING PROTEIN 8"/>
    <property type="match status" value="1"/>
</dbReference>
<dbReference type="Pfam" id="PF10482">
    <property type="entry name" value="CtIP_N"/>
    <property type="match status" value="1"/>
</dbReference>
<dbReference type="Pfam" id="PF08573">
    <property type="entry name" value="SAE2"/>
    <property type="match status" value="1"/>
</dbReference>
<feature type="chain" id="PRO_0000417039" description="DNA endonuclease RBBP8">
    <location>
        <begin position="1"/>
        <end position="856"/>
    </location>
</feature>
<feature type="region of interest" description="Essential for binding to the MRN complex and for RPA focus formation on DNA damage" evidence="1">
    <location>
        <begin position="25"/>
        <end position="48"/>
    </location>
</feature>
<feature type="region of interest" description="Disordered" evidence="3">
    <location>
        <begin position="143"/>
        <end position="174"/>
    </location>
</feature>
<feature type="region of interest" description="Disordered" evidence="3">
    <location>
        <begin position="423"/>
        <end position="456"/>
    </location>
</feature>
<feature type="region of interest" description="Damage-recruitment motif" evidence="4">
    <location>
        <begin position="493"/>
        <end position="515"/>
    </location>
</feature>
<feature type="region of interest" description="Disordered" evidence="3">
    <location>
        <begin position="695"/>
        <end position="732"/>
    </location>
</feature>
<feature type="coiled-coil region" evidence="2">
    <location>
        <begin position="38"/>
        <end position="87"/>
    </location>
</feature>
<feature type="coiled-coil region" evidence="2">
    <location>
        <begin position="120"/>
        <end position="141"/>
    </location>
</feature>
<feature type="compositionally biased region" description="Acidic residues" evidence="3">
    <location>
        <begin position="156"/>
        <end position="168"/>
    </location>
</feature>
<feature type="compositionally biased region" description="Basic and acidic residues" evidence="3">
    <location>
        <begin position="702"/>
        <end position="730"/>
    </location>
</feature>
<feature type="modified residue" description="Phosphothreonine" evidence="2">
    <location>
        <position position="806"/>
    </location>
</feature>
<feature type="modified residue" description="Phosphothreonine; by ATR" evidence="5">
    <location>
        <position position="818"/>
    </location>
</feature>
<feature type="mutagenesis site" description="Abolishes chromatin binding. Abolishes DNA-binding activity in vitro." evidence="4">
    <original>R</original>
    <variation>A</variation>
    <location>
        <position position="496"/>
    </location>
</feature>
<feature type="mutagenesis site" description="Abolishes chromatin binding. Abolishes DNA-binding activity in vitro." evidence="4">
    <original>K</original>
    <variation>A</variation>
    <location>
        <position position="498"/>
    </location>
</feature>